<organism>
    <name type="scientific">Sinorhizobium fredii (strain NBRC 101917 / NGR234)</name>
    <dbReference type="NCBI Taxonomy" id="394"/>
    <lineage>
        <taxon>Bacteria</taxon>
        <taxon>Pseudomonadati</taxon>
        <taxon>Pseudomonadota</taxon>
        <taxon>Alphaproteobacteria</taxon>
        <taxon>Hyphomicrobiales</taxon>
        <taxon>Rhizobiaceae</taxon>
        <taxon>Sinorhizobium/Ensifer group</taxon>
        <taxon>Sinorhizobium</taxon>
    </lineage>
</organism>
<geneLocation type="plasmid">
    <name>sym pNGR234a</name>
</geneLocation>
<proteinExistence type="inferred from homology"/>
<name>FIXA_SINFN</name>
<comment type="function">
    <text>May play a role in a redox process involved in nitrogen fixation.</text>
</comment>
<comment type="subunit">
    <text evidence="1">FixA and FixB form a heterodimer.</text>
</comment>
<comment type="similarity">
    <text evidence="1">Belongs to the ETF beta-subunit/FixA family.</text>
</comment>
<dbReference type="EMBL" id="Z68203">
    <property type="protein sequence ID" value="CAA92417.1"/>
    <property type="molecule type" value="Genomic_DNA"/>
</dbReference>
<dbReference type="EMBL" id="U00090">
    <property type="protein sequence ID" value="AAB91890.1"/>
    <property type="molecule type" value="Genomic_DNA"/>
</dbReference>
<dbReference type="RefSeq" id="NP_444103.1">
    <property type="nucleotide sequence ID" value="NC_000914.2"/>
</dbReference>
<dbReference type="RefSeq" id="WP_010875160.1">
    <property type="nucleotide sequence ID" value="NC_000914.2"/>
</dbReference>
<dbReference type="SMR" id="Q53210"/>
<dbReference type="KEGG" id="rhi:NGR_a01220"/>
<dbReference type="PATRIC" id="fig|394.7.peg.106"/>
<dbReference type="eggNOG" id="COG2086">
    <property type="taxonomic scope" value="Bacteria"/>
</dbReference>
<dbReference type="HOGENOM" id="CLU_060196_2_1_5"/>
<dbReference type="OrthoDB" id="9804960at2"/>
<dbReference type="Proteomes" id="UP000001054">
    <property type="component" value="Plasmid pNGR234a"/>
</dbReference>
<dbReference type="GO" id="GO:0009055">
    <property type="term" value="F:electron transfer activity"/>
    <property type="evidence" value="ECO:0007669"/>
    <property type="project" value="InterPro"/>
</dbReference>
<dbReference type="GO" id="GO:0009399">
    <property type="term" value="P:nitrogen fixation"/>
    <property type="evidence" value="ECO:0007669"/>
    <property type="project" value="UniProtKB-KW"/>
</dbReference>
<dbReference type="CDD" id="cd01714">
    <property type="entry name" value="ETF_beta"/>
    <property type="match status" value="1"/>
</dbReference>
<dbReference type="Gene3D" id="3.40.50.620">
    <property type="entry name" value="HUPs"/>
    <property type="match status" value="1"/>
</dbReference>
<dbReference type="InterPro" id="IPR000049">
    <property type="entry name" value="ET-Flavoprotein_bsu_CS"/>
</dbReference>
<dbReference type="InterPro" id="IPR014730">
    <property type="entry name" value="ETF_a/b_N"/>
</dbReference>
<dbReference type="InterPro" id="IPR012255">
    <property type="entry name" value="ETF_b"/>
</dbReference>
<dbReference type="InterPro" id="IPR033948">
    <property type="entry name" value="ETF_beta_N"/>
</dbReference>
<dbReference type="InterPro" id="IPR014729">
    <property type="entry name" value="Rossmann-like_a/b/a_fold"/>
</dbReference>
<dbReference type="PANTHER" id="PTHR21294">
    <property type="entry name" value="ELECTRON TRANSFER FLAVOPROTEIN BETA-SUBUNIT"/>
    <property type="match status" value="1"/>
</dbReference>
<dbReference type="PANTHER" id="PTHR21294:SF17">
    <property type="entry name" value="PROTEIN FIXA"/>
    <property type="match status" value="1"/>
</dbReference>
<dbReference type="Pfam" id="PF01012">
    <property type="entry name" value="ETF"/>
    <property type="match status" value="1"/>
</dbReference>
<dbReference type="PIRSF" id="PIRSF000090">
    <property type="entry name" value="Beta-ETF"/>
    <property type="match status" value="1"/>
</dbReference>
<dbReference type="SMART" id="SM00893">
    <property type="entry name" value="ETF"/>
    <property type="match status" value="1"/>
</dbReference>
<dbReference type="SUPFAM" id="SSF52402">
    <property type="entry name" value="Adenine nucleotide alpha hydrolases-like"/>
    <property type="match status" value="1"/>
</dbReference>
<dbReference type="PROSITE" id="PS01065">
    <property type="entry name" value="ETF_BETA"/>
    <property type="match status" value="1"/>
</dbReference>
<keyword id="KW-0249">Electron transport</keyword>
<keyword id="KW-0535">Nitrogen fixation</keyword>
<keyword id="KW-0614">Plasmid</keyword>
<keyword id="KW-1185">Reference proteome</keyword>
<keyword id="KW-0813">Transport</keyword>
<gene>
    <name type="primary">fixA</name>
    <name type="ordered locus">NGR_a01220</name>
    <name type="ORF">y4vB</name>
</gene>
<protein>
    <recommendedName>
        <fullName>Protein FixA</fullName>
    </recommendedName>
</protein>
<sequence>MHIVVCIKQVPDSAQIRVHPVTNTIMRQGVPTIINPYDLFALEQALQVRDHHGGEVTVLTMGPPMAEESLRKALTYGADRAILLTDRHFAGSDTLATSFALSQAIAKIGNSFGSPDIVFTGKQTIDGDTAQVGPGIAKRLDLVQLTYVAKVTSIDLRTRAITVERRAEGGTHVLKSELPCLITMLEGSNAIRRGSLDDALRAARSEIVKWNAVEAGIEDITKCGLRGSPTVVKRVFAPTPREQKAVQIDTVEKAMQDVANELVTSIFAHQPALEHELSSTRSVSR</sequence>
<evidence type="ECO:0000305" key="1"/>
<reference key="1">
    <citation type="journal article" date="1996" name="Genome Res.">
        <title>Sequencing the 500-kb GC-rich symbiotic replicon of Rhizobium sp. NGR234 using dye terminators and a thermostable 'sequenase': a beginning.</title>
        <authorList>
            <person name="Freiberg C."/>
            <person name="Perret X."/>
            <person name="Broughton W.J."/>
            <person name="Rosenthal A."/>
        </authorList>
    </citation>
    <scope>NUCLEOTIDE SEQUENCE [GENOMIC DNA]</scope>
</reference>
<reference key="2">
    <citation type="journal article" date="1997" name="Nature">
        <title>Molecular basis of symbiosis between Rhizobium and legumes.</title>
        <authorList>
            <person name="Freiberg C.A."/>
            <person name="Fellay R."/>
            <person name="Bairoch A."/>
            <person name="Broughton W.J."/>
            <person name="Rosenthal A."/>
            <person name="Perret X."/>
        </authorList>
    </citation>
    <scope>NUCLEOTIDE SEQUENCE [LARGE SCALE GENOMIC DNA]</scope>
    <source>
        <strain>NBRC 101917 / NGR234</strain>
    </source>
</reference>
<reference key="3">
    <citation type="journal article" date="2009" name="Appl. Environ. Microbiol.">
        <title>Rhizobium sp. strain NGR234 possesses a remarkable number of secretion systems.</title>
        <authorList>
            <person name="Schmeisser C."/>
            <person name="Liesegang H."/>
            <person name="Krysciak D."/>
            <person name="Bakkou N."/>
            <person name="Le Quere A."/>
            <person name="Wollherr A."/>
            <person name="Heinemeyer I."/>
            <person name="Morgenstern B."/>
            <person name="Pommerening-Roeser A."/>
            <person name="Flores M."/>
            <person name="Palacios R."/>
            <person name="Brenner S."/>
            <person name="Gottschalk G."/>
            <person name="Schmitz R.A."/>
            <person name="Broughton W.J."/>
            <person name="Perret X."/>
            <person name="Strittmatter A.W."/>
            <person name="Streit W.R."/>
        </authorList>
    </citation>
    <scope>NUCLEOTIDE SEQUENCE [LARGE SCALE GENOMIC DNA]</scope>
    <source>
        <strain>NBRC 101917 / NGR234</strain>
    </source>
</reference>
<accession>Q53210</accession>
<feature type="chain" id="PRO_0000167891" description="Protein FixA">
    <location>
        <begin position="1"/>
        <end position="285"/>
    </location>
</feature>